<evidence type="ECO:0000255" key="1">
    <source>
        <dbReference type="HAMAP-Rule" id="MF_00178"/>
    </source>
</evidence>
<proteinExistence type="inferred from homology"/>
<name>RISB_CAMJD</name>
<accession>A7H4Z4</accession>
<protein>
    <recommendedName>
        <fullName evidence="1">6,7-dimethyl-8-ribityllumazine synthase</fullName>
        <shortName evidence="1">DMRL synthase</shortName>
        <shortName evidence="1">LS</shortName>
        <shortName evidence="1">Lumazine synthase</shortName>
        <ecNumber evidence="1">2.5.1.78</ecNumber>
    </recommendedName>
</protein>
<keyword id="KW-0686">Riboflavin biosynthesis</keyword>
<keyword id="KW-0808">Transferase</keyword>
<sequence length="154" mass="16700">MNIIEGKLNLDSNTKIAIINARFNHIITDRLVEGAKDAFLRHGGKKENLSLILVPGAFELPYALKKAIESEKFDAICCVGAVIRGSTPHFDYVSAETTKGIANVSLNHNIPVSFGVLTTDTIEQAIERAGSKAGNKGFEAMTTVIEMLNLTKEL</sequence>
<gene>
    <name evidence="1" type="primary">ribH</name>
    <name type="ordered locus">JJD26997_1575</name>
</gene>
<dbReference type="EC" id="2.5.1.78" evidence="1"/>
<dbReference type="EMBL" id="CP000768">
    <property type="protein sequence ID" value="ABS43868.1"/>
    <property type="molecule type" value="Genomic_DNA"/>
</dbReference>
<dbReference type="SMR" id="A7H4Z4"/>
<dbReference type="KEGG" id="cjd:JJD26997_1575"/>
<dbReference type="HOGENOM" id="CLU_089358_1_1_7"/>
<dbReference type="UniPathway" id="UPA00275">
    <property type="reaction ID" value="UER00404"/>
</dbReference>
<dbReference type="Proteomes" id="UP000002302">
    <property type="component" value="Chromosome"/>
</dbReference>
<dbReference type="GO" id="GO:0005829">
    <property type="term" value="C:cytosol"/>
    <property type="evidence" value="ECO:0007669"/>
    <property type="project" value="TreeGrafter"/>
</dbReference>
<dbReference type="GO" id="GO:0009349">
    <property type="term" value="C:riboflavin synthase complex"/>
    <property type="evidence" value="ECO:0007669"/>
    <property type="project" value="InterPro"/>
</dbReference>
<dbReference type="GO" id="GO:0000906">
    <property type="term" value="F:6,7-dimethyl-8-ribityllumazine synthase activity"/>
    <property type="evidence" value="ECO:0007669"/>
    <property type="project" value="UniProtKB-UniRule"/>
</dbReference>
<dbReference type="GO" id="GO:0009231">
    <property type="term" value="P:riboflavin biosynthetic process"/>
    <property type="evidence" value="ECO:0007669"/>
    <property type="project" value="UniProtKB-UniRule"/>
</dbReference>
<dbReference type="CDD" id="cd09209">
    <property type="entry name" value="Lumazine_synthase-I"/>
    <property type="match status" value="1"/>
</dbReference>
<dbReference type="FunFam" id="3.40.50.960:FF:000001">
    <property type="entry name" value="6,7-dimethyl-8-ribityllumazine synthase"/>
    <property type="match status" value="1"/>
</dbReference>
<dbReference type="Gene3D" id="3.40.50.960">
    <property type="entry name" value="Lumazine/riboflavin synthase"/>
    <property type="match status" value="1"/>
</dbReference>
<dbReference type="HAMAP" id="MF_00178">
    <property type="entry name" value="Lumazine_synth"/>
    <property type="match status" value="1"/>
</dbReference>
<dbReference type="InterPro" id="IPR034964">
    <property type="entry name" value="LS"/>
</dbReference>
<dbReference type="InterPro" id="IPR002180">
    <property type="entry name" value="LS/RS"/>
</dbReference>
<dbReference type="InterPro" id="IPR036467">
    <property type="entry name" value="LS/RS_sf"/>
</dbReference>
<dbReference type="NCBIfam" id="TIGR00114">
    <property type="entry name" value="lumazine-synth"/>
    <property type="match status" value="1"/>
</dbReference>
<dbReference type="NCBIfam" id="NF000812">
    <property type="entry name" value="PRK00061.1-4"/>
    <property type="match status" value="1"/>
</dbReference>
<dbReference type="PANTHER" id="PTHR21058:SF0">
    <property type="entry name" value="6,7-DIMETHYL-8-RIBITYLLUMAZINE SYNTHASE"/>
    <property type="match status" value="1"/>
</dbReference>
<dbReference type="PANTHER" id="PTHR21058">
    <property type="entry name" value="6,7-DIMETHYL-8-RIBITYLLUMAZINE SYNTHASE DMRL SYNTHASE LUMAZINE SYNTHASE"/>
    <property type="match status" value="1"/>
</dbReference>
<dbReference type="Pfam" id="PF00885">
    <property type="entry name" value="DMRL_synthase"/>
    <property type="match status" value="1"/>
</dbReference>
<dbReference type="SUPFAM" id="SSF52121">
    <property type="entry name" value="Lumazine synthase"/>
    <property type="match status" value="1"/>
</dbReference>
<reference key="1">
    <citation type="submission" date="2007-07" db="EMBL/GenBank/DDBJ databases">
        <title>Complete genome sequence of Campylobacter jejuni subsp doylei 269.97 isolated from human blood.</title>
        <authorList>
            <person name="Fouts D.E."/>
            <person name="Mongodin E.F."/>
            <person name="Puiu D."/>
            <person name="Sebastian Y."/>
            <person name="Miller W.G."/>
            <person name="Mandrell R.E."/>
            <person name="Lastovica A.J."/>
            <person name="Nelson K.E."/>
        </authorList>
    </citation>
    <scope>NUCLEOTIDE SEQUENCE [LARGE SCALE GENOMIC DNA]</scope>
    <source>
        <strain>ATCC BAA-1458 / RM4099 / 269.97</strain>
    </source>
</reference>
<organism>
    <name type="scientific">Campylobacter jejuni subsp. doylei (strain ATCC BAA-1458 / RM4099 / 269.97)</name>
    <dbReference type="NCBI Taxonomy" id="360109"/>
    <lineage>
        <taxon>Bacteria</taxon>
        <taxon>Pseudomonadati</taxon>
        <taxon>Campylobacterota</taxon>
        <taxon>Epsilonproteobacteria</taxon>
        <taxon>Campylobacterales</taxon>
        <taxon>Campylobacteraceae</taxon>
        <taxon>Campylobacter</taxon>
    </lineage>
</organism>
<comment type="function">
    <text evidence="1">Catalyzes the formation of 6,7-dimethyl-8-ribityllumazine by condensation of 5-amino-6-(D-ribitylamino)uracil with 3,4-dihydroxy-2-butanone 4-phosphate. This is the penultimate step in the biosynthesis of riboflavin.</text>
</comment>
<comment type="catalytic activity">
    <reaction evidence="1">
        <text>(2S)-2-hydroxy-3-oxobutyl phosphate + 5-amino-6-(D-ribitylamino)uracil = 6,7-dimethyl-8-(1-D-ribityl)lumazine + phosphate + 2 H2O + H(+)</text>
        <dbReference type="Rhea" id="RHEA:26152"/>
        <dbReference type="ChEBI" id="CHEBI:15377"/>
        <dbReference type="ChEBI" id="CHEBI:15378"/>
        <dbReference type="ChEBI" id="CHEBI:15934"/>
        <dbReference type="ChEBI" id="CHEBI:43474"/>
        <dbReference type="ChEBI" id="CHEBI:58201"/>
        <dbReference type="ChEBI" id="CHEBI:58830"/>
        <dbReference type="EC" id="2.5.1.78"/>
    </reaction>
</comment>
<comment type="pathway">
    <text evidence="1">Cofactor biosynthesis; riboflavin biosynthesis; riboflavin from 2-hydroxy-3-oxobutyl phosphate and 5-amino-6-(D-ribitylamino)uracil: step 1/2.</text>
</comment>
<comment type="similarity">
    <text evidence="1">Belongs to the DMRL synthase family.</text>
</comment>
<feature type="chain" id="PRO_1000040391" description="6,7-dimethyl-8-ribityllumazine synthase">
    <location>
        <begin position="1"/>
        <end position="154"/>
    </location>
</feature>
<feature type="active site" description="Proton donor" evidence="1">
    <location>
        <position position="89"/>
    </location>
</feature>
<feature type="binding site" evidence="1">
    <location>
        <position position="23"/>
    </location>
    <ligand>
        <name>5-amino-6-(D-ribitylamino)uracil</name>
        <dbReference type="ChEBI" id="CHEBI:15934"/>
    </ligand>
</feature>
<feature type="binding site" evidence="1">
    <location>
        <begin position="57"/>
        <end position="59"/>
    </location>
    <ligand>
        <name>5-amino-6-(D-ribitylamino)uracil</name>
        <dbReference type="ChEBI" id="CHEBI:15934"/>
    </ligand>
</feature>
<feature type="binding site" evidence="1">
    <location>
        <begin position="81"/>
        <end position="83"/>
    </location>
    <ligand>
        <name>5-amino-6-(D-ribitylamino)uracil</name>
        <dbReference type="ChEBI" id="CHEBI:15934"/>
    </ligand>
</feature>
<feature type="binding site" evidence="1">
    <location>
        <begin position="86"/>
        <end position="87"/>
    </location>
    <ligand>
        <name>(2S)-2-hydroxy-3-oxobutyl phosphate</name>
        <dbReference type="ChEBI" id="CHEBI:58830"/>
    </ligand>
</feature>
<feature type="binding site" evidence="1">
    <location>
        <position position="114"/>
    </location>
    <ligand>
        <name>5-amino-6-(D-ribitylamino)uracil</name>
        <dbReference type="ChEBI" id="CHEBI:15934"/>
    </ligand>
</feature>
<feature type="binding site" evidence="1">
    <location>
        <position position="128"/>
    </location>
    <ligand>
        <name>(2S)-2-hydroxy-3-oxobutyl phosphate</name>
        <dbReference type="ChEBI" id="CHEBI:58830"/>
    </ligand>
</feature>